<comment type="subcellular location">
    <subcellularLocation>
        <location evidence="1">Cell membrane</location>
        <topology evidence="1">Multi-pass membrane protein</topology>
    </subcellularLocation>
</comment>
<comment type="similarity">
    <text evidence="1">Belongs to the UPF0391 family.</text>
</comment>
<feature type="chain" id="PRO_1000086960" description="UPF0391 membrane protein COXBURSA331_A2131">
    <location>
        <begin position="1"/>
        <end position="58"/>
    </location>
</feature>
<feature type="transmembrane region" description="Helical" evidence="1">
    <location>
        <begin position="3"/>
        <end position="23"/>
    </location>
</feature>
<feature type="transmembrane region" description="Helical" evidence="1">
    <location>
        <begin position="30"/>
        <end position="50"/>
    </location>
</feature>
<reference key="1">
    <citation type="submission" date="2007-11" db="EMBL/GenBank/DDBJ databases">
        <title>Genome sequencing of phylogenetically and phenotypically diverse Coxiella burnetii isolates.</title>
        <authorList>
            <person name="Seshadri R."/>
            <person name="Samuel J.E."/>
        </authorList>
    </citation>
    <scope>NUCLEOTIDE SEQUENCE [LARGE SCALE GENOMIC DNA]</scope>
    <source>
        <strain>RSA 331 / Henzerling II</strain>
    </source>
</reference>
<sequence length="58" mass="6402">MLFWVLIFFIIAVIAALFGFTGIAAASAGIAKILFFIFLVLFVISLIAMLVRGRRPKL</sequence>
<proteinExistence type="inferred from homology"/>
<dbReference type="EMBL" id="CP000890">
    <property type="protein sequence ID" value="ABX77655.1"/>
    <property type="molecule type" value="Genomic_DNA"/>
</dbReference>
<dbReference type="RefSeq" id="WP_005770008.1">
    <property type="nucleotide sequence ID" value="NC_010117.1"/>
</dbReference>
<dbReference type="KEGG" id="cbs:COXBURSA331_A2131"/>
<dbReference type="HOGENOM" id="CLU_187346_1_0_6"/>
<dbReference type="GO" id="GO:0005886">
    <property type="term" value="C:plasma membrane"/>
    <property type="evidence" value="ECO:0007669"/>
    <property type="project" value="UniProtKB-SubCell"/>
</dbReference>
<dbReference type="HAMAP" id="MF_01361">
    <property type="entry name" value="UPF0391"/>
    <property type="match status" value="1"/>
</dbReference>
<dbReference type="InterPro" id="IPR009760">
    <property type="entry name" value="DUF1328"/>
</dbReference>
<dbReference type="NCBIfam" id="NF010226">
    <property type="entry name" value="PRK13682.1-1"/>
    <property type="match status" value="1"/>
</dbReference>
<dbReference type="NCBIfam" id="NF010228">
    <property type="entry name" value="PRK13682.1-3"/>
    <property type="match status" value="1"/>
</dbReference>
<dbReference type="NCBIfam" id="NF010229">
    <property type="entry name" value="PRK13682.1-4"/>
    <property type="match status" value="1"/>
</dbReference>
<dbReference type="Pfam" id="PF07043">
    <property type="entry name" value="DUF1328"/>
    <property type="match status" value="1"/>
</dbReference>
<dbReference type="PIRSF" id="PIRSF036466">
    <property type="entry name" value="UCP036466"/>
    <property type="match status" value="1"/>
</dbReference>
<evidence type="ECO:0000255" key="1">
    <source>
        <dbReference type="HAMAP-Rule" id="MF_01361"/>
    </source>
</evidence>
<name>Y2131_COXBR</name>
<keyword id="KW-1003">Cell membrane</keyword>
<keyword id="KW-0472">Membrane</keyword>
<keyword id="KW-0812">Transmembrane</keyword>
<keyword id="KW-1133">Transmembrane helix</keyword>
<accession>A9NBB4</accession>
<gene>
    <name type="ordered locus">COXBURSA331_A2131</name>
</gene>
<organism>
    <name type="scientific">Coxiella burnetii (strain RSA 331 / Henzerling II)</name>
    <dbReference type="NCBI Taxonomy" id="360115"/>
    <lineage>
        <taxon>Bacteria</taxon>
        <taxon>Pseudomonadati</taxon>
        <taxon>Pseudomonadota</taxon>
        <taxon>Gammaproteobacteria</taxon>
        <taxon>Legionellales</taxon>
        <taxon>Coxiellaceae</taxon>
        <taxon>Coxiella</taxon>
    </lineage>
</organism>
<protein>
    <recommendedName>
        <fullName evidence="1">UPF0391 membrane protein COXBURSA331_A2131</fullName>
    </recommendedName>
</protein>